<proteinExistence type="inferred from homology"/>
<accession>A9M715</accession>
<dbReference type="EC" id="2.7.13.3"/>
<dbReference type="EMBL" id="CP000872">
    <property type="protein sequence ID" value="ABX62662.1"/>
    <property type="molecule type" value="Genomic_DNA"/>
</dbReference>
<dbReference type="RefSeq" id="WP_004691053.1">
    <property type="nucleotide sequence ID" value="NC_010103.1"/>
</dbReference>
<dbReference type="SMR" id="A9M715"/>
<dbReference type="GeneID" id="55591236"/>
<dbReference type="KEGG" id="bcs:BCAN_A1643"/>
<dbReference type="HOGENOM" id="CLU_000445_23_0_5"/>
<dbReference type="PhylomeDB" id="A9M715"/>
<dbReference type="Proteomes" id="UP000001385">
    <property type="component" value="Chromosome I"/>
</dbReference>
<dbReference type="GO" id="GO:0005737">
    <property type="term" value="C:cytoplasm"/>
    <property type="evidence" value="ECO:0007669"/>
    <property type="project" value="UniProtKB-SubCell"/>
</dbReference>
<dbReference type="GO" id="GO:0005886">
    <property type="term" value="C:plasma membrane"/>
    <property type="evidence" value="ECO:0007669"/>
    <property type="project" value="TreeGrafter"/>
</dbReference>
<dbReference type="GO" id="GO:0005524">
    <property type="term" value="F:ATP binding"/>
    <property type="evidence" value="ECO:0007669"/>
    <property type="project" value="UniProtKB-KW"/>
</dbReference>
<dbReference type="GO" id="GO:0009927">
    <property type="term" value="F:histidine phosphotransfer kinase activity"/>
    <property type="evidence" value="ECO:0007669"/>
    <property type="project" value="TreeGrafter"/>
</dbReference>
<dbReference type="GO" id="GO:0000155">
    <property type="term" value="F:phosphorelay sensor kinase activity"/>
    <property type="evidence" value="ECO:0007669"/>
    <property type="project" value="InterPro"/>
</dbReference>
<dbReference type="GO" id="GO:0051301">
    <property type="term" value="P:cell division"/>
    <property type="evidence" value="ECO:0007669"/>
    <property type="project" value="UniProtKB-KW"/>
</dbReference>
<dbReference type="GO" id="GO:0006355">
    <property type="term" value="P:regulation of DNA-templated transcription"/>
    <property type="evidence" value="ECO:0007669"/>
    <property type="project" value="InterPro"/>
</dbReference>
<dbReference type="CDD" id="cd00082">
    <property type="entry name" value="HisKA"/>
    <property type="match status" value="1"/>
</dbReference>
<dbReference type="CDD" id="cd00130">
    <property type="entry name" value="PAS"/>
    <property type="match status" value="1"/>
</dbReference>
<dbReference type="Gene3D" id="1.10.287.130">
    <property type="match status" value="1"/>
</dbReference>
<dbReference type="Gene3D" id="3.30.565.10">
    <property type="entry name" value="Histidine kinase-like ATPase, C-terminal domain"/>
    <property type="match status" value="1"/>
</dbReference>
<dbReference type="Gene3D" id="3.30.450.20">
    <property type="entry name" value="PAS domain"/>
    <property type="match status" value="1"/>
</dbReference>
<dbReference type="InterPro" id="IPR036890">
    <property type="entry name" value="HATPase_C_sf"/>
</dbReference>
<dbReference type="InterPro" id="IPR005467">
    <property type="entry name" value="His_kinase_dom"/>
</dbReference>
<dbReference type="InterPro" id="IPR003661">
    <property type="entry name" value="HisK_dim/P_dom"/>
</dbReference>
<dbReference type="InterPro" id="IPR036097">
    <property type="entry name" value="HisK_dim/P_sf"/>
</dbReference>
<dbReference type="InterPro" id="IPR000014">
    <property type="entry name" value="PAS"/>
</dbReference>
<dbReference type="InterPro" id="IPR035965">
    <property type="entry name" value="PAS-like_dom_sf"/>
</dbReference>
<dbReference type="InterPro" id="IPR013767">
    <property type="entry name" value="PAS_fold"/>
</dbReference>
<dbReference type="InterPro" id="IPR048231">
    <property type="entry name" value="PdhS_histid_kinase"/>
</dbReference>
<dbReference type="InterPro" id="IPR004358">
    <property type="entry name" value="Sig_transdc_His_kin-like_C"/>
</dbReference>
<dbReference type="NCBIfam" id="NF041593">
    <property type="entry name" value="histid_kinase_PdhS"/>
    <property type="match status" value="1"/>
</dbReference>
<dbReference type="NCBIfam" id="TIGR00229">
    <property type="entry name" value="sensory_box"/>
    <property type="match status" value="1"/>
</dbReference>
<dbReference type="PANTHER" id="PTHR43047:SF72">
    <property type="entry name" value="OSMOSENSING HISTIDINE PROTEIN KINASE SLN1"/>
    <property type="match status" value="1"/>
</dbReference>
<dbReference type="PANTHER" id="PTHR43047">
    <property type="entry name" value="TWO-COMPONENT HISTIDINE PROTEIN KINASE"/>
    <property type="match status" value="1"/>
</dbReference>
<dbReference type="Pfam" id="PF02518">
    <property type="entry name" value="HATPase_c"/>
    <property type="match status" value="1"/>
</dbReference>
<dbReference type="Pfam" id="PF00512">
    <property type="entry name" value="HisKA"/>
    <property type="match status" value="1"/>
</dbReference>
<dbReference type="Pfam" id="PF00989">
    <property type="entry name" value="PAS"/>
    <property type="match status" value="1"/>
</dbReference>
<dbReference type="Pfam" id="PF13188">
    <property type="entry name" value="PAS_8"/>
    <property type="match status" value="1"/>
</dbReference>
<dbReference type="PRINTS" id="PR00344">
    <property type="entry name" value="BCTRLSENSOR"/>
</dbReference>
<dbReference type="SMART" id="SM00387">
    <property type="entry name" value="HATPase_c"/>
    <property type="match status" value="1"/>
</dbReference>
<dbReference type="SMART" id="SM00388">
    <property type="entry name" value="HisKA"/>
    <property type="match status" value="1"/>
</dbReference>
<dbReference type="SMART" id="SM00091">
    <property type="entry name" value="PAS"/>
    <property type="match status" value="2"/>
</dbReference>
<dbReference type="SUPFAM" id="SSF55874">
    <property type="entry name" value="ATPase domain of HSP90 chaperone/DNA topoisomerase II/histidine kinase"/>
    <property type="match status" value="1"/>
</dbReference>
<dbReference type="SUPFAM" id="SSF47384">
    <property type="entry name" value="Homodimeric domain of signal transducing histidine kinase"/>
    <property type="match status" value="1"/>
</dbReference>
<dbReference type="SUPFAM" id="SSF55785">
    <property type="entry name" value="PYP-like sensor domain (PAS domain)"/>
    <property type="match status" value="1"/>
</dbReference>
<dbReference type="PROSITE" id="PS50109">
    <property type="entry name" value="HIS_KIN"/>
    <property type="match status" value="1"/>
</dbReference>
<dbReference type="PROSITE" id="PS50112">
    <property type="entry name" value="PAS"/>
    <property type="match status" value="1"/>
</dbReference>
<gene>
    <name type="primary">pdhS</name>
    <name type="ordered locus">BCAN_A1643</name>
</gene>
<protein>
    <recommendedName>
        <fullName>Cell-division control histidine kinase PdhS</fullName>
        <ecNumber>2.7.13.3</ecNumber>
    </recommendedName>
</protein>
<organism>
    <name type="scientific">Brucella canis (strain ATCC 23365 / NCTC 10854 / RM-666)</name>
    <dbReference type="NCBI Taxonomy" id="483179"/>
    <lineage>
        <taxon>Bacteria</taxon>
        <taxon>Pseudomonadati</taxon>
        <taxon>Pseudomonadota</taxon>
        <taxon>Alphaproteobacteria</taxon>
        <taxon>Hyphomicrobiales</taxon>
        <taxon>Brucellaceae</taxon>
        <taxon>Brucella/Ochrobactrum group</taxon>
        <taxon>Brucella</taxon>
    </lineage>
</organism>
<reference key="1">
    <citation type="submission" date="2007-10" db="EMBL/GenBank/DDBJ databases">
        <title>Brucella canis ATCC 23365 whole genome shotgun sequencing project.</title>
        <authorList>
            <person name="Setubal J.C."/>
            <person name="Bowns C."/>
            <person name="Boyle S."/>
            <person name="Crasta O.R."/>
            <person name="Czar M.J."/>
            <person name="Dharmanolla C."/>
            <person name="Gillespie J.J."/>
            <person name="Kenyon R.W."/>
            <person name="Lu J."/>
            <person name="Mane S."/>
            <person name="Mohapatra S."/>
            <person name="Nagrani S."/>
            <person name="Purkayastha A."/>
            <person name="Rajasimha H.K."/>
            <person name="Shallom J.M."/>
            <person name="Shallom S."/>
            <person name="Shukla M."/>
            <person name="Snyder E.E."/>
            <person name="Sobral B.W."/>
            <person name="Wattam A.R."/>
            <person name="Will R."/>
            <person name="Williams K."/>
            <person name="Yoo H."/>
            <person name="Bruce D."/>
            <person name="Detter C."/>
            <person name="Munk C."/>
            <person name="Brettin T.S."/>
        </authorList>
    </citation>
    <scope>NUCLEOTIDE SEQUENCE [LARGE SCALE GENOMIC DNA]</scope>
    <source>
        <strain>ATCC 23365 / NCTC 10854 / RM-666</strain>
    </source>
</reference>
<evidence type="ECO:0000250" key="1"/>
<evidence type="ECO:0000255" key="2">
    <source>
        <dbReference type="PROSITE-ProRule" id="PRU00107"/>
    </source>
</evidence>
<evidence type="ECO:0000255" key="3">
    <source>
        <dbReference type="PROSITE-ProRule" id="PRU00140"/>
    </source>
</evidence>
<evidence type="ECO:0000256" key="4">
    <source>
        <dbReference type="SAM" id="MobiDB-lite"/>
    </source>
</evidence>
<keyword id="KW-0067">ATP-binding</keyword>
<keyword id="KW-0131">Cell cycle</keyword>
<keyword id="KW-0132">Cell division</keyword>
<keyword id="KW-0963">Cytoplasm</keyword>
<keyword id="KW-0418">Kinase</keyword>
<keyword id="KW-0547">Nucleotide-binding</keyword>
<keyword id="KW-0597">Phosphoprotein</keyword>
<keyword id="KW-1185">Reference proteome</keyword>
<keyword id="KW-0808">Transferase</keyword>
<sequence>MSGSYPFIDIAALDSVREGFARGDAQLVLAHDLSTVLWVNGPGAKLFGYNRVEDLIEGQLDLPVATRRQIAAFSSENTSAPSAVAVRLGGGLRSELTHLHVSNIKLPDGVAALLVATQMPDNSAEAAISGLGDDSTHIALVDAVGKVVAASPRFALLDISASTLEDLIVEAGDATDRIVKRRIRTGSHSVPGAIARLTDTPALHLLCIVGDAPAQFQTAAEAVPLPDNAEAVLEEILPEQGDAPAQQAQKTHAEQPRPKTFAFDHDAPPARFIWKVGPDGTFSEISPDLAAVVGPNSADIVGRRFSDVANVFGFYTDGSIAALLLERDTWSGKRLLWPVEGTRLRVPVELAALPVYSRDREFLGFRGFGIVRPAEAEADPEEIGLALAGGIPQNRKPRKEPAETARMVGEDDVLALSEEVANDDQPAAVLPKPPLDITPTPGRRDSDKVISLLNSCAQEKVAADQAKFLKEKERATRPEGGLTKTERNAFREIAERLRKQGLANTRAESETPVSETSSIEPVEPTPPVKTRSEPIQPDETALLANLPVPVIIHSGDAIHYVNQALLDITGYESLDDIRSAGGVDVLFNSESDDGETRQSMVLRHADGSEEPVDAHLNAIAWRGGRALMLSLMPVTAADLPAPAELPAANDEEKQALEAHVEELKTILDTATDGVVLIDPEGRIRSMNHSASALFGYERDEAEGKFFSMLFAIESQRAAMDYLHGLSGNGVLSVLNDGREVIGREAKGGFIPLFMTIGKLPHTRGFCAVLRDITQWKRTEEELTNARKEAERASNQKTEFLARISHEIRTPLNAIIGFSELMADEKFGPIGNDRYRDYLRDINRSGNYVLALVNDLLDISKIEAGALDMQFEAVSLNDAIGEAIALMQPQANRERVIIRSSFQSNLPDIVADSRSIKQVALNLLSNAVRFTAPGGQVIVSTSYELNGDVVMRVRDTGIGMSKSEVEQALKPFRQINALEGRKAESAKDWRNEGTGLGLPLTKAMVEANRAQFAIDSNPGQGTVVEIVFPPTRVLAD</sequence>
<feature type="chain" id="PRO_0000361901" description="Cell-division control histidine kinase PdhS">
    <location>
        <begin position="1"/>
        <end position="1035"/>
    </location>
</feature>
<feature type="domain" description="PAS" evidence="3">
    <location>
        <begin position="659"/>
        <end position="730"/>
    </location>
</feature>
<feature type="domain" description="Histidine kinase" evidence="2">
    <location>
        <begin position="802"/>
        <end position="1031"/>
    </location>
</feature>
<feature type="region of interest" description="Important for polar localization" evidence="1">
    <location>
        <begin position="1"/>
        <end position="613"/>
    </location>
</feature>
<feature type="region of interest" description="Disordered" evidence="4">
    <location>
        <begin position="500"/>
        <end position="533"/>
    </location>
</feature>
<feature type="region of interest" description="Interaction with DivK" evidence="1">
    <location>
        <begin position="614"/>
        <end position="1035"/>
    </location>
</feature>
<feature type="modified residue" description="Phosphohistidine; by autocatalysis" evidence="2">
    <location>
        <position position="805"/>
    </location>
</feature>
<comment type="function">
    <text evidence="1">Functions as a polar differentiation marker. Essential protein that, by localizing in the old pole of dividing cells, controls cell division and maturation, probably through control of DivK phosphorylation status and cellular distribution, which in turn regulates CtrA, a transcriptional regulator of the minB operon. The asymmetrical localization of this protein is probably required for cells to enter a new division cycle (By similarity).</text>
</comment>
<comment type="catalytic activity">
    <reaction>
        <text>ATP + protein L-histidine = ADP + protein N-phospho-L-histidine.</text>
        <dbReference type="EC" id="2.7.13.3"/>
    </reaction>
</comment>
<comment type="subunit">
    <text evidence="1">Interacts with DivK.</text>
</comment>
<comment type="subcellular location">
    <subcellularLocation>
        <location evidence="1">Cytoplasm</location>
    </subcellularLocation>
    <text evidence="1">Localizes at the old pole of dividing cells. Colocalizes with DivK (By similarity).</text>
</comment>
<name>PDHS_BRUC2</name>